<dbReference type="EC" id="6.3.2.2" evidence="1"/>
<dbReference type="EMBL" id="CP000479">
    <property type="protein sequence ID" value="ABK64676.1"/>
    <property type="molecule type" value="Genomic_DNA"/>
</dbReference>
<dbReference type="SMR" id="A0QLR0"/>
<dbReference type="KEGG" id="mav:MAV_4721"/>
<dbReference type="HOGENOM" id="CLU_044848_1_0_11"/>
<dbReference type="Proteomes" id="UP000001574">
    <property type="component" value="Chromosome"/>
</dbReference>
<dbReference type="GO" id="GO:0005524">
    <property type="term" value="F:ATP binding"/>
    <property type="evidence" value="ECO:0007669"/>
    <property type="project" value="UniProtKB-KW"/>
</dbReference>
<dbReference type="GO" id="GO:0004357">
    <property type="term" value="F:glutamate-cysteine ligase activity"/>
    <property type="evidence" value="ECO:0007669"/>
    <property type="project" value="UniProtKB-EC"/>
</dbReference>
<dbReference type="GO" id="GO:0042398">
    <property type="term" value="P:modified amino acid biosynthetic process"/>
    <property type="evidence" value="ECO:0007669"/>
    <property type="project" value="InterPro"/>
</dbReference>
<dbReference type="Gene3D" id="3.30.590.20">
    <property type="match status" value="1"/>
</dbReference>
<dbReference type="HAMAP" id="MF_01609">
    <property type="entry name" value="Glu_cys_ligase_2"/>
    <property type="match status" value="1"/>
</dbReference>
<dbReference type="InterPro" id="IPR050141">
    <property type="entry name" value="GCL_type2/YbdK_subfam"/>
</dbReference>
<dbReference type="InterPro" id="IPR006336">
    <property type="entry name" value="GCS2"/>
</dbReference>
<dbReference type="InterPro" id="IPR014746">
    <property type="entry name" value="Gln_synth/guanido_kin_cat_dom"/>
</dbReference>
<dbReference type="InterPro" id="IPR011793">
    <property type="entry name" value="YbdK"/>
</dbReference>
<dbReference type="NCBIfam" id="TIGR02050">
    <property type="entry name" value="gshA_cyan_rel"/>
    <property type="match status" value="1"/>
</dbReference>
<dbReference type="NCBIfam" id="NF010042">
    <property type="entry name" value="PRK13517.1-2"/>
    <property type="match status" value="1"/>
</dbReference>
<dbReference type="NCBIfam" id="NF010043">
    <property type="entry name" value="PRK13517.1-3"/>
    <property type="match status" value="1"/>
</dbReference>
<dbReference type="NCBIfam" id="NF010044">
    <property type="entry name" value="PRK13517.1-4"/>
    <property type="match status" value="1"/>
</dbReference>
<dbReference type="PANTHER" id="PTHR36510">
    <property type="entry name" value="GLUTAMATE--CYSTEINE LIGASE 2-RELATED"/>
    <property type="match status" value="1"/>
</dbReference>
<dbReference type="PANTHER" id="PTHR36510:SF1">
    <property type="entry name" value="GLUTAMATE--CYSTEINE LIGASE 2-RELATED"/>
    <property type="match status" value="1"/>
</dbReference>
<dbReference type="Pfam" id="PF04107">
    <property type="entry name" value="GCS2"/>
    <property type="match status" value="1"/>
</dbReference>
<dbReference type="SUPFAM" id="SSF55931">
    <property type="entry name" value="Glutamine synthetase/guanido kinase"/>
    <property type="match status" value="1"/>
</dbReference>
<sequence>MSSVPARRGDAHIDFARSPRPTIGVEWEFALVDAQTRDLSNEATAVIAEIGENPRVHKELLRNTVEVVSGICRTVPEAMEDLRQTLGPARRIVRDRGMELFCAGAHPFAQWTTQKLTDAPRYAELIKRTQWWGRQMLIWGVHVHVGISSPNKVMPIMTSLLNYYPHLLALSASSPWWTGVDTGYASNRAMMFQQLPTAGLPFQFQTWAEFEGFVYDQKKTGIIDHVDEVRWDIRPSPHLGTLEMRICDGVSNLHELAALVALTHCLVVDLDRRLEADESLPTMPPWHHQENKWRAARYGLDAVIILDADSNERLVTEDLDDVLNRLEPVARKLQCADELAAVADIPRHGASYQRQRRVAEEHDGDLRAVVDALVAELEI</sequence>
<comment type="function">
    <text evidence="1">ATP-dependent carboxylate-amine ligase which exhibits weak glutamate--cysteine ligase activity.</text>
</comment>
<comment type="catalytic activity">
    <reaction evidence="1">
        <text>L-cysteine + L-glutamate + ATP = gamma-L-glutamyl-L-cysteine + ADP + phosphate + H(+)</text>
        <dbReference type="Rhea" id="RHEA:13285"/>
        <dbReference type="ChEBI" id="CHEBI:15378"/>
        <dbReference type="ChEBI" id="CHEBI:29985"/>
        <dbReference type="ChEBI" id="CHEBI:30616"/>
        <dbReference type="ChEBI" id="CHEBI:35235"/>
        <dbReference type="ChEBI" id="CHEBI:43474"/>
        <dbReference type="ChEBI" id="CHEBI:58173"/>
        <dbReference type="ChEBI" id="CHEBI:456216"/>
        <dbReference type="EC" id="6.3.2.2"/>
    </reaction>
</comment>
<comment type="similarity">
    <text evidence="1">Belongs to the glutamate--cysteine ligase type 2 family. YbdK subfamily.</text>
</comment>
<evidence type="ECO:0000255" key="1">
    <source>
        <dbReference type="HAMAP-Rule" id="MF_01609"/>
    </source>
</evidence>
<protein>
    <recommendedName>
        <fullName evidence="1">Putative glutamate--cysteine ligase 2</fullName>
        <ecNumber evidence="1">6.3.2.2</ecNumber>
    </recommendedName>
    <alternativeName>
        <fullName evidence="1">Gamma-glutamylcysteine synthetase 2</fullName>
        <shortName evidence="1">GCS 2</shortName>
        <shortName evidence="1">Gamma-GCS 2</shortName>
    </alternativeName>
</protein>
<name>GCS2_MYCA1</name>
<proteinExistence type="inferred from homology"/>
<reference key="1">
    <citation type="submission" date="2006-10" db="EMBL/GenBank/DDBJ databases">
        <authorList>
            <person name="Fleischmann R.D."/>
            <person name="Dodson R.J."/>
            <person name="Haft D.H."/>
            <person name="Merkel J.S."/>
            <person name="Nelson W.C."/>
            <person name="Fraser C.M."/>
        </authorList>
    </citation>
    <scope>NUCLEOTIDE SEQUENCE [LARGE SCALE GENOMIC DNA]</scope>
    <source>
        <strain>104</strain>
    </source>
</reference>
<feature type="chain" id="PRO_0000291493" description="Putative glutamate--cysteine ligase 2">
    <location>
        <begin position="1"/>
        <end position="379"/>
    </location>
</feature>
<gene>
    <name type="ordered locus">MAV_4721</name>
</gene>
<accession>A0QLR0</accession>
<organism>
    <name type="scientific">Mycobacterium avium (strain 104)</name>
    <dbReference type="NCBI Taxonomy" id="243243"/>
    <lineage>
        <taxon>Bacteria</taxon>
        <taxon>Bacillati</taxon>
        <taxon>Actinomycetota</taxon>
        <taxon>Actinomycetes</taxon>
        <taxon>Mycobacteriales</taxon>
        <taxon>Mycobacteriaceae</taxon>
        <taxon>Mycobacterium</taxon>
        <taxon>Mycobacterium avium complex (MAC)</taxon>
    </lineage>
</organism>
<keyword id="KW-0067">ATP-binding</keyword>
<keyword id="KW-0436">Ligase</keyword>
<keyword id="KW-0547">Nucleotide-binding</keyword>